<sequence>MEKPPFRQNQVCGSWVMKERLGTGGFGHVYLYQNQETSEKIAVKLCRLELNSKNKDRWSRGIQIMKKLKHLNVVTAKDVPEEMMHIALNDLPLLAMEYCSKGDLRKLLSKPENCCGLKESEVLSLLNDVGSGIQYLHENKIIHRDLKPENIVLQEINGKLVHKIIDLGYAKDLDQGSLCTSFVGTLQYLAPELFEGKSYTVTVDFWSFGTMIFECCCGFRPFLHNLQPVQWTSKVRNKGPKDIMAVEDMNGEVRFSTHLPYPNNLSRTLLEPLEGLLQLMLKWDPVQRGLGLNTDSKQPQCFVLLDQILSMKVVHILNMTTTQVHSFLLSPDEGLHSLQQRIENETKIELLNQDLLQETGVMSDPRKPAAQCVLDGVRGWDSYIVYLFDKSLTKYMGPLTARTLPESVNFIVRETKTQLPLSTLKKVWGEAVSYICGLREDYSRLFQGQRAAMLSLLRFNTNLTRYKNMMFSFSQQLKAKLDFFKTSIQYDLEKYSDQMQYGISSEKMLKAWHENEERAAAFAQVAEIGHLDEEIMALHSEIVELQRSPYARRQGDVMEQLQEKAIELYKQLKAKCKMPDPQHGYSDSSEMVKVIVQTVQNQDRVLRDLYAHLSKILLSKQKIIDLFPKIERTLECIKEADTTVMQMQIKRQREFWHLLKIACAQNTTRSSVSQSGEMPSSLSTWNQTQAQCSSRLPMSLQVPHEGDSVNHLLEENQRYLTQLTSLLQETTEEKSESIMAQDWSWTKYESLVAKSPRL</sequence>
<feature type="chain" id="PRO_0000268827" description="Inhibitor of nuclear factor kappa-B kinase subunit alpha">
    <location>
        <begin position="1"/>
        <end position="758"/>
    </location>
</feature>
<feature type="domain" description="Protein kinase" evidence="3">
    <location>
        <begin position="15"/>
        <end position="301"/>
    </location>
</feature>
<feature type="region of interest" description="Leucine-zipper">
    <location>
        <begin position="456"/>
        <end position="477"/>
    </location>
</feature>
<feature type="region of interest" description="NEMO-binding" evidence="1">
    <location>
        <begin position="741"/>
        <end position="746"/>
    </location>
</feature>
<feature type="active site" description="Proton acceptor" evidence="3 4">
    <location>
        <position position="145"/>
    </location>
</feature>
<feature type="binding site" evidence="3">
    <location>
        <begin position="21"/>
        <end position="29"/>
    </location>
    <ligand>
        <name>ATP</name>
        <dbReference type="ChEBI" id="CHEBI:30616"/>
    </ligand>
</feature>
<feature type="binding site" evidence="3">
    <location>
        <position position="44"/>
    </location>
    <ligand>
        <name>ATP</name>
        <dbReference type="ChEBI" id="CHEBI:30616"/>
    </ligand>
</feature>
<feature type="sequence conflict" description="In Ref. 1; AAW68010." evidence="6" ref="1">
    <original>G</original>
    <variation>E</variation>
    <location>
        <position position="61"/>
    </location>
</feature>
<feature type="sequence conflict" description="In Ref. 1; AAW68010." evidence="6" ref="1">
    <original>S</original>
    <variation>L</variation>
    <location>
        <position position="363"/>
    </location>
</feature>
<feature type="sequence conflict" description="In Ref. 1; AAW68010." evidence="6" ref="1">
    <original>L</original>
    <variation>P</variation>
    <location>
        <position position="438"/>
    </location>
</feature>
<feature type="sequence conflict" description="In Ref. 1; AAW68010." evidence="6" ref="1">
    <original>L</original>
    <variation>P</variation>
    <location>
        <position position="617"/>
    </location>
</feature>
<feature type="sequence conflict" description="In Ref. 1; AAW68010." evidence="6" ref="1">
    <original>P</original>
    <variation>A</variation>
    <location>
        <position position="756"/>
    </location>
</feature>
<evidence type="ECO:0000250" key="1"/>
<evidence type="ECO:0000250" key="2">
    <source>
        <dbReference type="UniProtKB" id="O15111"/>
    </source>
</evidence>
<evidence type="ECO:0000255" key="3">
    <source>
        <dbReference type="PROSITE-ProRule" id="PRU00159"/>
    </source>
</evidence>
<evidence type="ECO:0000255" key="4">
    <source>
        <dbReference type="PROSITE-ProRule" id="PRU10027"/>
    </source>
</evidence>
<evidence type="ECO:0000269" key="5">
    <source>
    </source>
</evidence>
<evidence type="ECO:0000305" key="6"/>
<reference key="1">
    <citation type="journal article" date="2005" name="Curr. Biol.">
        <title>Zebrafish IkappaB kinase 1 negatively regulates NF-kappaB activity.</title>
        <authorList>
            <person name="Correa R.G."/>
            <person name="Matsui T."/>
            <person name="Tergaonkar V."/>
            <person name="Rodriguez-Esteban C."/>
            <person name="Izpisua-Belmonte J.C."/>
            <person name="Verma I.M."/>
        </authorList>
    </citation>
    <scope>NUCLEOTIDE SEQUENCE [MRNA]</scope>
    <scope>DEVELOPMENTAL STAGE</scope>
    <scope>INTERACTION WITH IKBKG</scope>
</reference>
<reference key="2">
    <citation type="submission" date="2003-04" db="EMBL/GenBank/DDBJ databases">
        <authorList>
            <consortium name="NIH - Zebrafish Gene Collection (ZGC) project"/>
        </authorList>
    </citation>
    <scope>NUCLEOTIDE SEQUENCE [LARGE SCALE MRNA]</scope>
    <source>
        <strain>SJD</strain>
    </source>
</reference>
<dbReference type="EC" id="2.7.11.10" evidence="2"/>
<dbReference type="EMBL" id="AY735397">
    <property type="protein sequence ID" value="AAW68010.1"/>
    <property type="molecule type" value="mRNA"/>
</dbReference>
<dbReference type="EMBL" id="BC051614">
    <property type="protein sequence ID" value="AAH51614.1"/>
    <property type="molecule type" value="mRNA"/>
</dbReference>
<dbReference type="RefSeq" id="NP_956611.1">
    <property type="nucleotide sequence ID" value="NM_200317.1"/>
</dbReference>
<dbReference type="SMR" id="Q4G3H4"/>
<dbReference type="FunCoup" id="Q4G3H4">
    <property type="interactions" value="1807"/>
</dbReference>
<dbReference type="STRING" id="7955.ENSDARP00000013115"/>
<dbReference type="PaxDb" id="7955-ENSDARP00000013115"/>
<dbReference type="GeneID" id="393287"/>
<dbReference type="KEGG" id="dre:393287"/>
<dbReference type="AGR" id="ZFIN:ZDB-GENE-040426-1069"/>
<dbReference type="CTD" id="1147"/>
<dbReference type="ZFIN" id="ZDB-GENE-040426-1069">
    <property type="gene designation" value="chuk"/>
</dbReference>
<dbReference type="eggNOG" id="KOG4250">
    <property type="taxonomic scope" value="Eukaryota"/>
</dbReference>
<dbReference type="InParanoid" id="Q4G3H4"/>
<dbReference type="OrthoDB" id="267381at2759"/>
<dbReference type="PhylomeDB" id="Q4G3H4"/>
<dbReference type="Reactome" id="R-DRE-198323">
    <property type="pathway name" value="AKT phosphorylates targets in the cytosol"/>
</dbReference>
<dbReference type="PRO" id="PR:Q4G3H4"/>
<dbReference type="Proteomes" id="UP000000437">
    <property type="component" value="Chromosome 13"/>
</dbReference>
<dbReference type="GO" id="GO:0005737">
    <property type="term" value="C:cytoplasm"/>
    <property type="evidence" value="ECO:0000318"/>
    <property type="project" value="GO_Central"/>
</dbReference>
<dbReference type="GO" id="GO:0008385">
    <property type="term" value="C:IkappaB kinase complex"/>
    <property type="evidence" value="ECO:0000318"/>
    <property type="project" value="GO_Central"/>
</dbReference>
<dbReference type="GO" id="GO:0005634">
    <property type="term" value="C:nucleus"/>
    <property type="evidence" value="ECO:0007669"/>
    <property type="project" value="UniProtKB-SubCell"/>
</dbReference>
<dbReference type="GO" id="GO:0005524">
    <property type="term" value="F:ATP binding"/>
    <property type="evidence" value="ECO:0007669"/>
    <property type="project" value="UniProtKB-KW"/>
</dbReference>
<dbReference type="GO" id="GO:0008384">
    <property type="term" value="F:IkappaB kinase activity"/>
    <property type="evidence" value="ECO:0007669"/>
    <property type="project" value="UniProtKB-EC"/>
</dbReference>
<dbReference type="GO" id="GO:0046982">
    <property type="term" value="F:protein heterodimerization activity"/>
    <property type="evidence" value="ECO:0000250"/>
    <property type="project" value="UniProtKB"/>
</dbReference>
<dbReference type="GO" id="GO:0042803">
    <property type="term" value="F:protein homodimerization activity"/>
    <property type="evidence" value="ECO:0000250"/>
    <property type="project" value="UniProtKB"/>
</dbReference>
<dbReference type="GO" id="GO:0004674">
    <property type="term" value="F:protein serine/threonine kinase activity"/>
    <property type="evidence" value="ECO:0000318"/>
    <property type="project" value="GO_Central"/>
</dbReference>
<dbReference type="GO" id="GO:0071356">
    <property type="term" value="P:cellular response to tumor necrosis factor"/>
    <property type="evidence" value="ECO:0000250"/>
    <property type="project" value="UniProtKB"/>
</dbReference>
<dbReference type="GO" id="GO:0007417">
    <property type="term" value="P:central nervous system development"/>
    <property type="evidence" value="ECO:0000315"/>
    <property type="project" value="ZFIN"/>
</dbReference>
<dbReference type="GO" id="GO:0055113">
    <property type="term" value="P:epiboly involved in gastrulation with mouth forming second"/>
    <property type="evidence" value="ECO:0000315"/>
    <property type="project" value="ZFIN"/>
</dbReference>
<dbReference type="GO" id="GO:0043066">
    <property type="term" value="P:negative regulation of apoptotic process"/>
    <property type="evidence" value="ECO:0000315"/>
    <property type="project" value="ZFIN"/>
</dbReference>
<dbReference type="GO" id="GO:0043124">
    <property type="term" value="P:negative regulation of canonical NF-kappaB signal transduction"/>
    <property type="evidence" value="ECO:0000314"/>
    <property type="project" value="ZFIN"/>
</dbReference>
<dbReference type="GO" id="GO:0043123">
    <property type="term" value="P:positive regulation of canonical NF-kappaB signal transduction"/>
    <property type="evidence" value="ECO:0000318"/>
    <property type="project" value="GO_Central"/>
</dbReference>
<dbReference type="GO" id="GO:0045944">
    <property type="term" value="P:positive regulation of transcription by RNA polymerase II"/>
    <property type="evidence" value="ECO:0000250"/>
    <property type="project" value="UniProtKB"/>
</dbReference>
<dbReference type="GO" id="GO:0001757">
    <property type="term" value="P:somite specification"/>
    <property type="evidence" value="ECO:0000315"/>
    <property type="project" value="ZFIN"/>
</dbReference>
<dbReference type="GO" id="GO:0033209">
    <property type="term" value="P:tumor necrosis factor-mediated signaling pathway"/>
    <property type="evidence" value="ECO:0000318"/>
    <property type="project" value="GO_Central"/>
</dbReference>
<dbReference type="CDD" id="cd17046">
    <property type="entry name" value="Ubl_IKKA_like"/>
    <property type="match status" value="1"/>
</dbReference>
<dbReference type="FunFam" id="1.20.1270.250:FF:000001">
    <property type="entry name" value="Inhibitor of nuclear factor kappa-B kinase subunit alpha"/>
    <property type="match status" value="1"/>
</dbReference>
<dbReference type="FunFam" id="1.10.510.10:FF:000147">
    <property type="entry name" value="Inhibitor of nuclear factor kappa-B kinase subunit beta"/>
    <property type="match status" value="1"/>
</dbReference>
<dbReference type="Gene3D" id="1.20.1270.250">
    <property type="match status" value="1"/>
</dbReference>
<dbReference type="Gene3D" id="6.10.250.2110">
    <property type="match status" value="1"/>
</dbReference>
<dbReference type="Gene3D" id="3.10.20.90">
    <property type="entry name" value="Phosphatidylinositol 3-kinase Catalytic Subunit, Chain A, domain 1"/>
    <property type="match status" value="1"/>
</dbReference>
<dbReference type="Gene3D" id="1.10.510.10">
    <property type="entry name" value="Transferase(Phosphotransferase) domain 1"/>
    <property type="match status" value="1"/>
</dbReference>
<dbReference type="InterPro" id="IPR041185">
    <property type="entry name" value="IKBKB_SDD"/>
</dbReference>
<dbReference type="InterPro" id="IPR046375">
    <property type="entry name" value="IKBKB_SDD_sf"/>
</dbReference>
<dbReference type="InterPro" id="IPR051180">
    <property type="entry name" value="IKK"/>
</dbReference>
<dbReference type="InterPro" id="IPR022007">
    <property type="entry name" value="IKKbetaNEMObind"/>
</dbReference>
<dbReference type="InterPro" id="IPR011009">
    <property type="entry name" value="Kinase-like_dom_sf"/>
</dbReference>
<dbReference type="InterPro" id="IPR000719">
    <property type="entry name" value="Prot_kinase_dom"/>
</dbReference>
<dbReference type="InterPro" id="IPR017441">
    <property type="entry name" value="Protein_kinase_ATP_BS"/>
</dbReference>
<dbReference type="InterPro" id="IPR008271">
    <property type="entry name" value="Ser/Thr_kinase_AS"/>
</dbReference>
<dbReference type="PANTHER" id="PTHR22969">
    <property type="entry name" value="IKB KINASE"/>
    <property type="match status" value="1"/>
</dbReference>
<dbReference type="PANTHER" id="PTHR22969:SF13">
    <property type="entry name" value="INHIBITOR OF NUCLEAR FACTOR KAPPA-B KINASE SUBUNIT ALPHA"/>
    <property type="match status" value="1"/>
</dbReference>
<dbReference type="Pfam" id="PF18397">
    <property type="entry name" value="IKBKB_SDD"/>
    <property type="match status" value="1"/>
</dbReference>
<dbReference type="Pfam" id="PF12179">
    <property type="entry name" value="IKKbetaNEMObind"/>
    <property type="match status" value="1"/>
</dbReference>
<dbReference type="Pfam" id="PF00069">
    <property type="entry name" value="Pkinase"/>
    <property type="match status" value="1"/>
</dbReference>
<dbReference type="SMART" id="SM01239">
    <property type="entry name" value="IKKbetaNEMObind"/>
    <property type="match status" value="1"/>
</dbReference>
<dbReference type="SMART" id="SM00220">
    <property type="entry name" value="S_TKc"/>
    <property type="match status" value="1"/>
</dbReference>
<dbReference type="SUPFAM" id="SSF56112">
    <property type="entry name" value="Protein kinase-like (PK-like)"/>
    <property type="match status" value="1"/>
</dbReference>
<dbReference type="PROSITE" id="PS00107">
    <property type="entry name" value="PROTEIN_KINASE_ATP"/>
    <property type="match status" value="1"/>
</dbReference>
<dbReference type="PROSITE" id="PS50011">
    <property type="entry name" value="PROTEIN_KINASE_DOM"/>
    <property type="match status" value="1"/>
</dbReference>
<dbReference type="PROSITE" id="PS00108">
    <property type="entry name" value="PROTEIN_KINASE_ST"/>
    <property type="match status" value="1"/>
</dbReference>
<protein>
    <recommendedName>
        <fullName>Inhibitor of nuclear factor kappa-B kinase subunit alpha</fullName>
        <shortName>I kappa-B kinase alpha</shortName>
        <shortName>IKK-A</shortName>
        <shortName>IKK-alpha</shortName>
        <shortName>IkBKA</shortName>
        <shortName>IkappaB kinase</shortName>
        <ecNumber evidence="2">2.7.11.10</ecNumber>
    </recommendedName>
    <alternativeName>
        <fullName>Conserved helix-loop-helix ubiquitous kinase</fullName>
    </alternativeName>
    <alternativeName>
        <fullName>I-kappa-B kinase 1</fullName>
        <shortName>IKK1</shortName>
    </alternativeName>
    <alternativeName>
        <fullName>Nuclear factor NF-kappa-B inhibitor kinase alpha</fullName>
        <shortName>NFKBIKA</shortName>
    </alternativeName>
</protein>
<proteinExistence type="evidence at protein level"/>
<accession>Q4G3H4</accession>
<accession>Q7ZTU1</accession>
<gene>
    <name type="primary">chuk</name>
    <name type="synonym">ikk1</name>
    <name type="ORF">zgc:56539</name>
</gene>
<comment type="function">
    <text evidence="2">Phosphorylates inhibitors of NF-kappa-B thus leading to the dissociation of the inhibitor/NF-kappa-B complex and ultimately the degradation of the inhibitor. Phosphorylates 'Ser-10' of histone H3 at NF-kappa-B-regulated promoters during inflammatory responses triggered by cytokines.</text>
</comment>
<comment type="catalytic activity">
    <reaction evidence="2">
        <text>L-seryl-[I-kappa-B protein] + ATP = O-phospho-L-seryl-[I-kappa-B protein] + ADP + H(+)</text>
        <dbReference type="Rhea" id="RHEA:19073"/>
        <dbReference type="Rhea" id="RHEA-COMP:13698"/>
        <dbReference type="Rhea" id="RHEA-COMP:13699"/>
        <dbReference type="ChEBI" id="CHEBI:15378"/>
        <dbReference type="ChEBI" id="CHEBI:29999"/>
        <dbReference type="ChEBI" id="CHEBI:30616"/>
        <dbReference type="ChEBI" id="CHEBI:83421"/>
        <dbReference type="ChEBI" id="CHEBI:456216"/>
        <dbReference type="EC" id="2.7.11.10"/>
    </reaction>
</comment>
<comment type="activity regulation">
    <text evidence="1">Activated when phosphorylated and inactivated when dephosphorylated.</text>
</comment>
<comment type="subunit">
    <text evidence="5">Directly interacts with ikbkg/nemo.</text>
</comment>
<comment type="subcellular location">
    <subcellularLocation>
        <location evidence="1">Cytoplasm</location>
    </subcellularLocation>
    <subcellularLocation>
        <location evidence="1">Nucleus</location>
    </subcellularLocation>
    <text evidence="1">Shuttles between the cytoplasm and the nucleus.</text>
</comment>
<comment type="developmental stage">
    <text evidence="5">Abundantly expressed from the blastula period through early gastrulation. During early somitogenesis, transcripts are dorsally localized at the level of the segmental plate and the presumptive notochord. At the 18-somite stage, expression becomes largely detectable throughout the somitic tissue At late embryonic stages, expression is particularly evident in the tectum, cerebellum, hindbrain region, and eyes. After hatching, transcripts can also be detected in the myotomes and pectoral fins.</text>
</comment>
<comment type="similarity">
    <text evidence="3">Belongs to the protein kinase superfamily. Ser/Thr protein kinase family. I-kappa-B kinase subfamily.</text>
</comment>
<keyword id="KW-0067">ATP-binding</keyword>
<keyword id="KW-0963">Cytoplasm</keyword>
<keyword id="KW-0418">Kinase</keyword>
<keyword id="KW-0547">Nucleotide-binding</keyword>
<keyword id="KW-0539">Nucleus</keyword>
<keyword id="KW-0597">Phosphoprotein</keyword>
<keyword id="KW-1185">Reference proteome</keyword>
<keyword id="KW-0723">Serine/threonine-protein kinase</keyword>
<keyword id="KW-0808">Transferase</keyword>
<name>IKKA_DANRE</name>
<organism>
    <name type="scientific">Danio rerio</name>
    <name type="common">Zebrafish</name>
    <name type="synonym">Brachydanio rerio</name>
    <dbReference type="NCBI Taxonomy" id="7955"/>
    <lineage>
        <taxon>Eukaryota</taxon>
        <taxon>Metazoa</taxon>
        <taxon>Chordata</taxon>
        <taxon>Craniata</taxon>
        <taxon>Vertebrata</taxon>
        <taxon>Euteleostomi</taxon>
        <taxon>Actinopterygii</taxon>
        <taxon>Neopterygii</taxon>
        <taxon>Teleostei</taxon>
        <taxon>Ostariophysi</taxon>
        <taxon>Cypriniformes</taxon>
        <taxon>Danionidae</taxon>
        <taxon>Danioninae</taxon>
        <taxon>Danio</taxon>
    </lineage>
</organism>